<gene>
    <name type="primary">Xpo5</name>
    <name type="synonym">Kiaa1291</name>
    <name type="synonym">Ranbp21</name>
</gene>
<sequence>MEMEQVNALCEELVKAVTVMMDPSSTQRYRLEALKFCEEFKEKCPICVPCGLKLAEKTQIAIVRHFGLQILEHVVKFRWNSMSRLEKVYLKNSVMELIANGTLRILEEENHIKDVLSRIVVEMIKREWPQHWPDMLMELDTLFRQGETQRELVMFILLRLAEDVVTFQTLPTQRRRDIQQTLTQNMERILNFLLNTLQENVNKYQQMKTDSSQEAEAQANCRVSVAALNTLAGYIDWVSLNHITAENCKLVETLCLLLNEQELQLGAAECLLIAVSRKGKLEDRKRLMILFGDVAMHYILSAAQTADGGGLVEKHYLFLKRLCQVLCALGNLLCALLALDANIQTPINFGMYLESFLAFTTHPSQFLRSSTHMTWGALFRHEVLSRDPALLAVIPKYLRASMTNLVKMGFPSKTDSPSCEYSRFDFDSDEDFNAFFNSSRAQHGEVVRCVCRLDPKTSFQMAAEWLKYQLSASIDTGPVNSCSTAGTGEGGFCSIFSPSYVQWEAMTFFLESVINQMFRTLDKEELPVSDGIELLQLVLNFEIKDPLVLSCVLTNVSALFPFVTYKPAFLPQVFSKLFSFVTFESVGESKAPRTRAVRNVRRHACSSINKMCRDYPDLVLPNFDMLYSHVKQLLSNELLLTQMEKCALMEALVLVSNQFKDYERQKLFLEELMAPVVNIWLSEEMCRALSDIDSFIAYVGADLKSCDPAVEDPCGLNRARMSFCVYSILGVMRRTSWPSDLEEAKAGGFVVGYTPSGNPIFRNPCTEQILRLLDNLLALVRTHNTLYTPEMLTKMAEPFTKALDIVESEKTAILGLPQPLLEFNDHPVYRTTLERMQRFFGILYENCYHILGKAGPSMQQDFYTVEDLASQLLGSAFVNLNNIPDFRLRSMLRVFVKPLVLFCPSEHYETLISPILGPLFTYLHMRLSQKWHVINQRSILCGEDEIAEDNPESQEMLEEQLVRMLTREAMDLIMACCVSKKTADHTAAPTADGDDEEMMATEVAPSSVVELTDLGKCLMKHEDVCTALLITAFNSLTWKDTLSCQRATTQLCWPLLKQVMSGTLLADAVTWLFTSVLKGLQMHGQHDGCMASLVHLAFQIYEALRPRYLEIRAVMEQIPEINKESLDQFDCKLLNPSLQKAADKRRKDHFKRLIAGCIGKPLGEQFRKEVHIKNLPWLFKKPKPMLETEVLDSEEGGLATIFEP</sequence>
<keyword id="KW-0007">Acetylation</keyword>
<keyword id="KW-0025">Alternative splicing</keyword>
<keyword id="KW-0963">Cytoplasm</keyword>
<keyword id="KW-0539">Nucleus</keyword>
<keyword id="KW-0653">Protein transport</keyword>
<keyword id="KW-1185">Reference proteome</keyword>
<keyword id="KW-0694">RNA-binding</keyword>
<keyword id="KW-0943">RNA-mediated gene silencing</keyword>
<keyword id="KW-0813">Transport</keyword>
<keyword id="KW-0820">tRNA-binding</keyword>
<comment type="function">
    <text evidence="1">Mediates the nuclear export of proteins bearing a double-stranded RNA binding domain (dsRBD) and double-stranded RNAs (cargos). XPO5 in the nucleus binds cooperatively to the RNA and to the GTPase Ran in its active GTP-bound form. Proteins containing dsRBDs can associate with this trimeric complex through the RNA. Docking of this complex to the nuclear pore complex (NPC) is mediated through binding to nucleoporins. Upon transit of a nuclear export complex into the cytoplasm, hydrolysis of Ran-GTP to Ran-GDP (induced by RANBP1 and RANGAP1, respectively) cause disassembly of the complex and release of the cargo from the export receptor. XPO5 then returns to the nuclear compartment by diffusion through the nuclear pore complex, to mediate another round of transport. The directionality of nuclear export is thought to be conferred by an asymmetric distribution of the GTP- and GDP-bound forms of Ran between the cytoplasm and nucleus. Overexpression may in some circumstances enhance RNA-mediated gene silencing (RNAi) (By similarity). Mediates nuclear export of ADAR/ADAR1 in a RanGTP-dependent manner (By similarity).</text>
</comment>
<comment type="function">
    <text evidence="1">Mediates the nuclear export of micro-RNA precursors, which form short hairpins. Also mediates the nuclear export of synthetic short hairpin RNAs used for RNA interference. In some circumstances can also mediate the nuclear export of deacylated and aminoacylated tRNAs. Specifically recognizes dsRNAs that lack a 5'-overhang in a sequence-independent manner, have only a short 3'-overhang, and that have a double-stranded length of at least 15 base-pairs. Binding is dependent on Ran-GTP (By similarity).</text>
</comment>
<comment type="subunit">
    <text evidence="1">Component of a nuclear export receptor complex composed of XPO5, RAN, dsRNA-binding proteins and dsRNA. Found in a nuclear export complex with XPO5, RAN, EEF1A1, and aminoacylated tRNA. Found in a nuclear export complex with XPO5, RAN, ILF3 and dsRNA. Found in a nuclear export complex with XPO5, RAN and pre-miRNA. Found in a nuclear export complex with XPO5, RAN, ILF3 and minihelix VA1 dsRNA. Found in a nuclear export complex with XPO5, RAN, ILF3, ZNF346 and dsRNA. Interacts with EEF1A1, ILF3, NUP153, NUP214 and ZNF346. Interacts with RAN and cargo proteins in a GTP-dependent manner. Interacts with ADAR/ADAR1 (via DRBM domains). Interacts with SMAD4; mediates nuclear export of SMAD4. Interacts with RAN (GTP-bound form).</text>
</comment>
<comment type="subcellular location">
    <subcellularLocation>
        <location evidence="1">Nucleus</location>
    </subcellularLocation>
    <subcellularLocation>
        <location evidence="1">Cytoplasm</location>
    </subcellularLocation>
    <text evidence="1">Shuttles between the nucleus and the cytoplasm.</text>
</comment>
<comment type="alternative products">
    <event type="alternative splicing"/>
    <isoform>
        <id>Q924C1-1</id>
        <name>1</name>
        <sequence type="displayed"/>
    </isoform>
    <isoform>
        <id>Q924C1-2</id>
        <name>2</name>
        <sequence type="described" ref="VSP_018462 VSP_018465"/>
    </isoform>
    <isoform>
        <id>Q924C1-3</id>
        <name>3</name>
        <sequence type="described" ref="VSP_018463 VSP_018464"/>
    </isoform>
</comment>
<comment type="similarity">
    <text evidence="4">Belongs to the exportin family.</text>
</comment>
<evidence type="ECO:0000250" key="1">
    <source>
        <dbReference type="UniProtKB" id="Q9HAV4"/>
    </source>
</evidence>
<evidence type="ECO:0000303" key="2">
    <source>
    </source>
</evidence>
<evidence type="ECO:0000303" key="3">
    <source>
    </source>
</evidence>
<evidence type="ECO:0000305" key="4"/>
<name>XPO5_MOUSE</name>
<protein>
    <recommendedName>
        <fullName>Exportin-5</fullName>
        <shortName>Exp5</shortName>
    </recommendedName>
    <alternativeName>
        <fullName>Ran-binding protein 21</fullName>
    </alternativeName>
</protein>
<reference key="1">
    <citation type="journal article" date="2002" name="EMBO J.">
        <title>Exp5 exports eEF1A via tRNA from nuclei and synergizes with other transport pathways to confine translation to the cytoplasm.</title>
        <authorList>
            <person name="Bohnsack M.T."/>
            <person name="Regener K."/>
            <person name="Schwappach B."/>
            <person name="Saffrich R."/>
            <person name="Paraskeva E."/>
            <person name="Hartmann E."/>
            <person name="Goerlich D."/>
        </authorList>
    </citation>
    <scope>NUCLEOTIDE SEQUENCE [MRNA] (ISOFORM 1)</scope>
</reference>
<reference key="2">
    <citation type="journal article" date="2003" name="DNA Res.">
        <title>Prediction of the coding sequences of mouse homologues of KIAA gene: II. The complete nucleotide sequences of 400 mouse KIAA-homologous cDNAs identified by screening of terminal sequences of cDNA clones randomly sampled from size-fractionated libraries.</title>
        <authorList>
            <person name="Okazaki N."/>
            <person name="Kikuno R."/>
            <person name="Ohara R."/>
            <person name="Inamoto S."/>
            <person name="Aizawa H."/>
            <person name="Yuasa S."/>
            <person name="Nakajima D."/>
            <person name="Nagase T."/>
            <person name="Ohara O."/>
            <person name="Koga H."/>
        </authorList>
    </citation>
    <scope>NUCLEOTIDE SEQUENCE [LARGE SCALE MRNA] (ISOFORM 2)</scope>
    <source>
        <tissue>Brain</tissue>
    </source>
</reference>
<reference key="3">
    <citation type="journal article" date="2004" name="Genome Res.">
        <title>The status, quality, and expansion of the NIH full-length cDNA project: the Mammalian Gene Collection (MGC).</title>
        <authorList>
            <consortium name="The MGC Project Team"/>
        </authorList>
    </citation>
    <scope>NUCLEOTIDE SEQUENCE [LARGE SCALE MRNA] (ISOFORMS 1 AND 3)</scope>
    <source>
        <strain>FVB/N</strain>
        <tissue>Mammary gland</tissue>
    </source>
</reference>
<reference key="4">
    <citation type="journal article" date="2005" name="Science">
        <title>The transcriptional landscape of the mammalian genome.</title>
        <authorList>
            <person name="Carninci P."/>
            <person name="Kasukawa T."/>
            <person name="Katayama S."/>
            <person name="Gough J."/>
            <person name="Frith M.C."/>
            <person name="Maeda N."/>
            <person name="Oyama R."/>
            <person name="Ravasi T."/>
            <person name="Lenhard B."/>
            <person name="Wells C."/>
            <person name="Kodzius R."/>
            <person name="Shimokawa K."/>
            <person name="Bajic V.B."/>
            <person name="Brenner S.E."/>
            <person name="Batalov S."/>
            <person name="Forrest A.R."/>
            <person name="Zavolan M."/>
            <person name="Davis M.J."/>
            <person name="Wilming L.G."/>
            <person name="Aidinis V."/>
            <person name="Allen J.E."/>
            <person name="Ambesi-Impiombato A."/>
            <person name="Apweiler R."/>
            <person name="Aturaliya R.N."/>
            <person name="Bailey T.L."/>
            <person name="Bansal M."/>
            <person name="Baxter L."/>
            <person name="Beisel K.W."/>
            <person name="Bersano T."/>
            <person name="Bono H."/>
            <person name="Chalk A.M."/>
            <person name="Chiu K.P."/>
            <person name="Choudhary V."/>
            <person name="Christoffels A."/>
            <person name="Clutterbuck D.R."/>
            <person name="Crowe M.L."/>
            <person name="Dalla E."/>
            <person name="Dalrymple B.P."/>
            <person name="de Bono B."/>
            <person name="Della Gatta G."/>
            <person name="di Bernardo D."/>
            <person name="Down T."/>
            <person name="Engstrom P."/>
            <person name="Fagiolini M."/>
            <person name="Faulkner G."/>
            <person name="Fletcher C.F."/>
            <person name="Fukushima T."/>
            <person name="Furuno M."/>
            <person name="Futaki S."/>
            <person name="Gariboldi M."/>
            <person name="Georgii-Hemming P."/>
            <person name="Gingeras T.R."/>
            <person name="Gojobori T."/>
            <person name="Green R.E."/>
            <person name="Gustincich S."/>
            <person name="Harbers M."/>
            <person name="Hayashi Y."/>
            <person name="Hensch T.K."/>
            <person name="Hirokawa N."/>
            <person name="Hill D."/>
            <person name="Huminiecki L."/>
            <person name="Iacono M."/>
            <person name="Ikeo K."/>
            <person name="Iwama A."/>
            <person name="Ishikawa T."/>
            <person name="Jakt M."/>
            <person name="Kanapin A."/>
            <person name="Katoh M."/>
            <person name="Kawasawa Y."/>
            <person name="Kelso J."/>
            <person name="Kitamura H."/>
            <person name="Kitano H."/>
            <person name="Kollias G."/>
            <person name="Krishnan S.P."/>
            <person name="Kruger A."/>
            <person name="Kummerfeld S.K."/>
            <person name="Kurochkin I.V."/>
            <person name="Lareau L.F."/>
            <person name="Lazarevic D."/>
            <person name="Lipovich L."/>
            <person name="Liu J."/>
            <person name="Liuni S."/>
            <person name="McWilliam S."/>
            <person name="Madan Babu M."/>
            <person name="Madera M."/>
            <person name="Marchionni L."/>
            <person name="Matsuda H."/>
            <person name="Matsuzawa S."/>
            <person name="Miki H."/>
            <person name="Mignone F."/>
            <person name="Miyake S."/>
            <person name="Morris K."/>
            <person name="Mottagui-Tabar S."/>
            <person name="Mulder N."/>
            <person name="Nakano N."/>
            <person name="Nakauchi H."/>
            <person name="Ng P."/>
            <person name="Nilsson R."/>
            <person name="Nishiguchi S."/>
            <person name="Nishikawa S."/>
            <person name="Nori F."/>
            <person name="Ohara O."/>
            <person name="Okazaki Y."/>
            <person name="Orlando V."/>
            <person name="Pang K.C."/>
            <person name="Pavan W.J."/>
            <person name="Pavesi G."/>
            <person name="Pesole G."/>
            <person name="Petrovsky N."/>
            <person name="Piazza S."/>
            <person name="Reed J."/>
            <person name="Reid J.F."/>
            <person name="Ring B.Z."/>
            <person name="Ringwald M."/>
            <person name="Rost B."/>
            <person name="Ruan Y."/>
            <person name="Salzberg S.L."/>
            <person name="Sandelin A."/>
            <person name="Schneider C."/>
            <person name="Schoenbach C."/>
            <person name="Sekiguchi K."/>
            <person name="Semple C.A."/>
            <person name="Seno S."/>
            <person name="Sessa L."/>
            <person name="Sheng Y."/>
            <person name="Shibata Y."/>
            <person name="Shimada H."/>
            <person name="Shimada K."/>
            <person name="Silva D."/>
            <person name="Sinclair B."/>
            <person name="Sperling S."/>
            <person name="Stupka E."/>
            <person name="Sugiura K."/>
            <person name="Sultana R."/>
            <person name="Takenaka Y."/>
            <person name="Taki K."/>
            <person name="Tammoja K."/>
            <person name="Tan S.L."/>
            <person name="Tang S."/>
            <person name="Taylor M.S."/>
            <person name="Tegner J."/>
            <person name="Teichmann S.A."/>
            <person name="Ueda H.R."/>
            <person name="van Nimwegen E."/>
            <person name="Verardo R."/>
            <person name="Wei C.L."/>
            <person name="Yagi K."/>
            <person name="Yamanishi H."/>
            <person name="Zabarovsky E."/>
            <person name="Zhu S."/>
            <person name="Zimmer A."/>
            <person name="Hide W."/>
            <person name="Bult C."/>
            <person name="Grimmond S.M."/>
            <person name="Teasdale R.D."/>
            <person name="Liu E.T."/>
            <person name="Brusic V."/>
            <person name="Quackenbush J."/>
            <person name="Wahlestedt C."/>
            <person name="Mattick J.S."/>
            <person name="Hume D.A."/>
            <person name="Kai C."/>
            <person name="Sasaki D."/>
            <person name="Tomaru Y."/>
            <person name="Fukuda S."/>
            <person name="Kanamori-Katayama M."/>
            <person name="Suzuki M."/>
            <person name="Aoki J."/>
            <person name="Arakawa T."/>
            <person name="Iida J."/>
            <person name="Imamura K."/>
            <person name="Itoh M."/>
            <person name="Kato T."/>
            <person name="Kawaji H."/>
            <person name="Kawagashira N."/>
            <person name="Kawashima T."/>
            <person name="Kojima M."/>
            <person name="Kondo S."/>
            <person name="Konno H."/>
            <person name="Nakano K."/>
            <person name="Ninomiya N."/>
            <person name="Nishio T."/>
            <person name="Okada M."/>
            <person name="Plessy C."/>
            <person name="Shibata K."/>
            <person name="Shiraki T."/>
            <person name="Suzuki S."/>
            <person name="Tagami M."/>
            <person name="Waki K."/>
            <person name="Watahiki A."/>
            <person name="Okamura-Oho Y."/>
            <person name="Suzuki H."/>
            <person name="Kawai J."/>
            <person name="Hayashizaki Y."/>
        </authorList>
    </citation>
    <scope>NUCLEOTIDE SEQUENCE [LARGE SCALE MRNA] OF 1-521 AND 959-1204</scope>
    <source>
        <strain>C57BL/6J</strain>
    </source>
</reference>
<reference key="5">
    <citation type="journal article" date="2010" name="Cell">
        <title>A tissue-specific atlas of mouse protein phosphorylation and expression.</title>
        <authorList>
            <person name="Huttlin E.L."/>
            <person name="Jedrychowski M.P."/>
            <person name="Elias J.E."/>
            <person name="Goswami T."/>
            <person name="Rad R."/>
            <person name="Beausoleil S.A."/>
            <person name="Villen J."/>
            <person name="Haas W."/>
            <person name="Sowa M.E."/>
            <person name="Gygi S.P."/>
        </authorList>
    </citation>
    <scope>IDENTIFICATION BY MASS SPECTROMETRY [LARGE SCALE ANALYSIS]</scope>
    <source>
        <tissue>Brain</tissue>
        <tissue>Brown adipose tissue</tissue>
        <tissue>Heart</tissue>
        <tissue>Kidney</tissue>
        <tissue>Liver</tissue>
        <tissue>Lung</tissue>
        <tissue>Pancreas</tissue>
        <tissue>Spleen</tissue>
        <tissue>Testis</tissue>
    </source>
</reference>
<proteinExistence type="evidence at protein level"/>
<organism>
    <name type="scientific">Mus musculus</name>
    <name type="common">Mouse</name>
    <dbReference type="NCBI Taxonomy" id="10090"/>
    <lineage>
        <taxon>Eukaryota</taxon>
        <taxon>Metazoa</taxon>
        <taxon>Chordata</taxon>
        <taxon>Craniata</taxon>
        <taxon>Vertebrata</taxon>
        <taxon>Euteleostomi</taxon>
        <taxon>Mammalia</taxon>
        <taxon>Eutheria</taxon>
        <taxon>Euarchontoglires</taxon>
        <taxon>Glires</taxon>
        <taxon>Rodentia</taxon>
        <taxon>Myomorpha</taxon>
        <taxon>Muroidea</taxon>
        <taxon>Muridae</taxon>
        <taxon>Murinae</taxon>
        <taxon>Mus</taxon>
        <taxon>Mus</taxon>
    </lineage>
</organism>
<feature type="chain" id="PRO_0000235300" description="Exportin-5">
    <location>
        <begin position="1"/>
        <end position="1204"/>
    </location>
</feature>
<feature type="region of interest" description="Necessary for interaction with Ran" evidence="1">
    <location>
        <begin position="1"/>
        <end position="108"/>
    </location>
</feature>
<feature type="region of interest" description="Necessary for interaction with ILF3" evidence="1">
    <location>
        <begin position="533"/>
        <end position="640"/>
    </location>
</feature>
<feature type="region of interest" description="Pre-siRNA binding" evidence="1">
    <location>
        <begin position="641"/>
        <end position="642"/>
    </location>
</feature>
<feature type="site" description="Pre-siRNA binding" evidence="1">
    <location>
        <position position="441"/>
    </location>
</feature>
<feature type="site" description="Pre-siRNA binding" evidence="1">
    <location>
        <position position="448"/>
    </location>
</feature>
<feature type="site" description="Pre-siRNA binding" evidence="1">
    <location>
        <position position="718"/>
    </location>
</feature>
<feature type="site" description="Pre-siRNA binding" evidence="1">
    <location>
        <position position="1045"/>
    </location>
</feature>
<feature type="modified residue" description="N6-acetyllysine" evidence="1">
    <location>
        <position position="396"/>
    </location>
</feature>
<feature type="splice variant" id="VSP_018462" description="In isoform 2." evidence="2">
    <location>
        <begin position="1"/>
        <end position="720"/>
    </location>
</feature>
<feature type="splice variant" id="VSP_018463" description="In isoform 3." evidence="3">
    <original>K</original>
    <variation>V</variation>
    <location>
        <position position="208"/>
    </location>
</feature>
<feature type="splice variant" id="VSP_018464" description="In isoform 3." evidence="3">
    <location>
        <begin position="209"/>
        <end position="1204"/>
    </location>
</feature>
<feature type="splice variant" id="VSP_018465" description="In isoform 2." evidence="2">
    <original>M</original>
    <variation>MPLSTPALVLSPQ</variation>
    <location>
        <position position="925"/>
    </location>
</feature>
<feature type="sequence conflict" description="In Ref. 3; AAH55455." evidence="4" ref="3">
    <original>V</original>
    <variation>I</variation>
    <location>
        <position position="48"/>
    </location>
</feature>
<feature type="sequence conflict" description="In Ref. 3; AAH55455." evidence="4" ref="3">
    <original>F</original>
    <variation>S</variation>
    <location>
        <position position="143"/>
    </location>
</feature>
<accession>Q924C1</accession>
<accession>A2RRJ5</accession>
<accession>Q7TMP2</accession>
<accession>Q80TF9</accession>
<accession>Q9CRI9</accession>
<accession>Q9CT48</accession>
<dbReference type="EMBL" id="AF343581">
    <property type="protein sequence ID" value="AAK68050.1"/>
    <property type="molecule type" value="mRNA"/>
</dbReference>
<dbReference type="EMBL" id="AK122486">
    <property type="protein sequence ID" value="BAC65768.1"/>
    <property type="molecule type" value="mRNA"/>
</dbReference>
<dbReference type="EMBL" id="BC055455">
    <property type="protein sequence ID" value="AAH55455.1"/>
    <property type="molecule type" value="mRNA"/>
</dbReference>
<dbReference type="EMBL" id="BC131661">
    <property type="protein sequence ID" value="AAI31662.1"/>
    <property type="molecule type" value="mRNA"/>
</dbReference>
<dbReference type="EMBL" id="AK010389">
    <property type="protein sequence ID" value="BAB26904.1"/>
    <property type="molecule type" value="mRNA"/>
</dbReference>
<dbReference type="EMBL" id="AK011190">
    <property type="protein sequence ID" value="BAB27455.1"/>
    <property type="molecule type" value="mRNA"/>
</dbReference>
<dbReference type="CCDS" id="CCDS37631.1">
    <molecule id="Q924C1-1"/>
</dbReference>
<dbReference type="RefSeq" id="NP_082474.1">
    <molecule id="Q924C1-1"/>
    <property type="nucleotide sequence ID" value="NM_028198.3"/>
</dbReference>
<dbReference type="SMR" id="Q924C1"/>
<dbReference type="BioGRID" id="215307">
    <property type="interactions" value="9"/>
</dbReference>
<dbReference type="FunCoup" id="Q924C1">
    <property type="interactions" value="4119"/>
</dbReference>
<dbReference type="IntAct" id="Q924C1">
    <property type="interactions" value="2"/>
</dbReference>
<dbReference type="MINT" id="Q924C1"/>
<dbReference type="STRING" id="10090.ENSMUSP00000084257"/>
<dbReference type="GlyGen" id="Q924C1">
    <property type="glycosylation" value="1 site, 1 N-linked glycan (1 site)"/>
</dbReference>
<dbReference type="iPTMnet" id="Q924C1"/>
<dbReference type="PhosphoSitePlus" id="Q924C1"/>
<dbReference type="SwissPalm" id="Q924C1"/>
<dbReference type="jPOST" id="Q924C1"/>
<dbReference type="PaxDb" id="10090-ENSMUSP00000084257"/>
<dbReference type="PeptideAtlas" id="Q924C1"/>
<dbReference type="ProteomicsDB" id="299717">
    <molecule id="Q924C1-1"/>
</dbReference>
<dbReference type="ProteomicsDB" id="299718">
    <molecule id="Q924C1-2"/>
</dbReference>
<dbReference type="ProteomicsDB" id="299719">
    <molecule id="Q924C1-3"/>
</dbReference>
<dbReference type="Pumba" id="Q924C1"/>
<dbReference type="Antibodypedia" id="3239">
    <property type="antibodies" value="232 antibodies from 31 providers"/>
</dbReference>
<dbReference type="DNASU" id="72322"/>
<dbReference type="Ensembl" id="ENSMUST00000087031.7">
    <molecule id="Q924C1-1"/>
    <property type="protein sequence ID" value="ENSMUSP00000084257.6"/>
    <property type="gene ID" value="ENSMUSG00000067150.7"/>
</dbReference>
<dbReference type="GeneID" id="72322"/>
<dbReference type="KEGG" id="mmu:72322"/>
<dbReference type="UCSC" id="uc008crz.1">
    <molecule id="Q924C1-3"/>
    <property type="organism name" value="mouse"/>
</dbReference>
<dbReference type="UCSC" id="uc008csa.1">
    <molecule id="Q924C1-1"/>
    <property type="organism name" value="mouse"/>
</dbReference>
<dbReference type="UCSC" id="uc012aun.1">
    <molecule id="Q924C1-2"/>
    <property type="organism name" value="mouse"/>
</dbReference>
<dbReference type="AGR" id="MGI:1913789"/>
<dbReference type="CTD" id="57510"/>
<dbReference type="MGI" id="MGI:1913789">
    <property type="gene designation" value="Xpo5"/>
</dbReference>
<dbReference type="VEuPathDB" id="HostDB:ENSMUSG00000067150"/>
<dbReference type="eggNOG" id="KOG2020">
    <property type="taxonomic scope" value="Eukaryota"/>
</dbReference>
<dbReference type="GeneTree" id="ENSGT00940000153408"/>
<dbReference type="HOGENOM" id="CLU_002828_0_0_1"/>
<dbReference type="InParanoid" id="Q924C1"/>
<dbReference type="OMA" id="IAKRSWG"/>
<dbReference type="OrthoDB" id="2215036at2759"/>
<dbReference type="PhylomeDB" id="Q924C1"/>
<dbReference type="TreeFam" id="TF323382"/>
<dbReference type="BioGRID-ORCS" id="72322">
    <property type="hits" value="17 hits in 84 CRISPR screens"/>
</dbReference>
<dbReference type="ChiTaRS" id="Xpo5">
    <property type="organism name" value="mouse"/>
</dbReference>
<dbReference type="PRO" id="PR:Q924C1"/>
<dbReference type="Proteomes" id="UP000000589">
    <property type="component" value="Chromosome 17"/>
</dbReference>
<dbReference type="RNAct" id="Q924C1">
    <property type="molecule type" value="protein"/>
</dbReference>
<dbReference type="Bgee" id="ENSMUSG00000067150">
    <property type="expression patterns" value="Expressed in dorsal pancreas and 249 other cell types or tissues"/>
</dbReference>
<dbReference type="GO" id="GO:0005829">
    <property type="term" value="C:cytosol"/>
    <property type="evidence" value="ECO:0007669"/>
    <property type="project" value="Ensembl"/>
</dbReference>
<dbReference type="GO" id="GO:0005654">
    <property type="term" value="C:nucleoplasm"/>
    <property type="evidence" value="ECO:0007669"/>
    <property type="project" value="Ensembl"/>
</dbReference>
<dbReference type="GO" id="GO:0016442">
    <property type="term" value="C:RISC complex"/>
    <property type="evidence" value="ECO:0007669"/>
    <property type="project" value="Ensembl"/>
</dbReference>
<dbReference type="GO" id="GO:0042565">
    <property type="term" value="C:RNA nuclear export complex"/>
    <property type="evidence" value="ECO:0007669"/>
    <property type="project" value="Ensembl"/>
</dbReference>
<dbReference type="GO" id="GO:0003729">
    <property type="term" value="F:mRNA binding"/>
    <property type="evidence" value="ECO:0007669"/>
    <property type="project" value="Ensembl"/>
</dbReference>
<dbReference type="GO" id="GO:0005049">
    <property type="term" value="F:nuclear export signal receptor activity"/>
    <property type="evidence" value="ECO:0000314"/>
    <property type="project" value="MGI"/>
</dbReference>
<dbReference type="GO" id="GO:0070883">
    <property type="term" value="F:pre-miRNA binding"/>
    <property type="evidence" value="ECO:0007669"/>
    <property type="project" value="Ensembl"/>
</dbReference>
<dbReference type="GO" id="GO:1905172">
    <property type="term" value="F:RISC complex binding"/>
    <property type="evidence" value="ECO:0007669"/>
    <property type="project" value="Ensembl"/>
</dbReference>
<dbReference type="GO" id="GO:0031267">
    <property type="term" value="F:small GTPase binding"/>
    <property type="evidence" value="ECO:0007669"/>
    <property type="project" value="Ensembl"/>
</dbReference>
<dbReference type="GO" id="GO:0000049">
    <property type="term" value="F:tRNA binding"/>
    <property type="evidence" value="ECO:0000314"/>
    <property type="project" value="MGI"/>
</dbReference>
<dbReference type="GO" id="GO:0035281">
    <property type="term" value="P:pre-miRNA export from nucleus"/>
    <property type="evidence" value="ECO:0007669"/>
    <property type="project" value="Ensembl"/>
</dbReference>
<dbReference type="GO" id="GO:0006611">
    <property type="term" value="P:protein export from nucleus"/>
    <property type="evidence" value="ECO:0000314"/>
    <property type="project" value="MGI"/>
</dbReference>
<dbReference type="FunFam" id="1.25.10.10:FF:000204">
    <property type="entry name" value="Exportin 5"/>
    <property type="match status" value="1"/>
</dbReference>
<dbReference type="Gene3D" id="1.25.10.10">
    <property type="entry name" value="Leucine-rich Repeat Variant"/>
    <property type="match status" value="1"/>
</dbReference>
<dbReference type="InterPro" id="IPR011989">
    <property type="entry name" value="ARM-like"/>
</dbReference>
<dbReference type="InterPro" id="IPR016024">
    <property type="entry name" value="ARM-type_fold"/>
</dbReference>
<dbReference type="InterPro" id="IPR013598">
    <property type="entry name" value="Exportin-1/Importin-b-like"/>
</dbReference>
<dbReference type="InterPro" id="IPR045478">
    <property type="entry name" value="Exportin-5_C"/>
</dbReference>
<dbReference type="InterPro" id="IPR001494">
    <property type="entry name" value="Importin-beta_N"/>
</dbReference>
<dbReference type="InterPro" id="IPR045065">
    <property type="entry name" value="XPO1/5"/>
</dbReference>
<dbReference type="PANTHER" id="PTHR11223">
    <property type="entry name" value="EXPORTIN 1/5"/>
    <property type="match status" value="1"/>
</dbReference>
<dbReference type="PANTHER" id="PTHR11223:SF3">
    <property type="entry name" value="EXPORTIN-5"/>
    <property type="match status" value="1"/>
</dbReference>
<dbReference type="Pfam" id="PF19273">
    <property type="entry name" value="Exportin-5"/>
    <property type="match status" value="1"/>
</dbReference>
<dbReference type="Pfam" id="PF03810">
    <property type="entry name" value="IBN_N"/>
    <property type="match status" value="1"/>
</dbReference>
<dbReference type="Pfam" id="PF08389">
    <property type="entry name" value="Xpo1"/>
    <property type="match status" value="1"/>
</dbReference>
<dbReference type="SMART" id="SM00913">
    <property type="entry name" value="IBN_N"/>
    <property type="match status" value="1"/>
</dbReference>
<dbReference type="SUPFAM" id="SSF48371">
    <property type="entry name" value="ARM repeat"/>
    <property type="match status" value="1"/>
</dbReference>